<keyword id="KW-0963">Cytoplasm</keyword>
<keyword id="KW-0520">NAD</keyword>
<keyword id="KW-0560">Oxidoreductase</keyword>
<keyword id="KW-0597">Phosphoprotein</keyword>
<keyword id="KW-0346">Stress response</keyword>
<reference key="1">
    <citation type="journal article" date="2008" name="J. Bacteriol.">
        <title>Genome sequence of Staphylococcus aureus strain Newman and comparative analysis of staphylococcal genomes: polymorphism and evolution of two major pathogenicity islands.</title>
        <authorList>
            <person name="Baba T."/>
            <person name="Bae T."/>
            <person name="Schneewind O."/>
            <person name="Takeuchi F."/>
            <person name="Hiramatsu K."/>
        </authorList>
    </citation>
    <scope>NUCLEOTIDE SEQUENCE [LARGE SCALE GENOMIC DNA]</scope>
    <source>
        <strain>Newman</strain>
    </source>
</reference>
<reference key="2">
    <citation type="journal article" date="2008" name="Science">
        <title>A nitric oxide-inducible lactate dehydrogenase enables Staphylococcus aureus to resist innate immunity.</title>
        <authorList>
            <person name="Richardson A.R."/>
            <person name="Libby S.J."/>
            <person name="Fang F.C."/>
        </authorList>
    </citation>
    <scope>FUNCTION IN NITROSATIVE STRESS</scope>
</reference>
<accession>A6QK89</accession>
<protein>
    <recommendedName>
        <fullName evidence="1">L-lactate dehydrogenase 2</fullName>
        <shortName evidence="1">L-LDH 2</shortName>
        <ecNumber evidence="1">1.1.1.27</ecNumber>
    </recommendedName>
</protein>
<proteinExistence type="evidence at protein level"/>
<dbReference type="EC" id="1.1.1.27" evidence="1"/>
<dbReference type="EMBL" id="AP009351">
    <property type="protein sequence ID" value="BAF68771.1"/>
    <property type="molecule type" value="Genomic_DNA"/>
</dbReference>
<dbReference type="RefSeq" id="WP_000846637.1">
    <property type="nucleotide sequence ID" value="NZ_JBBIAE010000005.1"/>
</dbReference>
<dbReference type="SMR" id="A6QK89"/>
<dbReference type="KEGG" id="sae:NWMN_2499"/>
<dbReference type="HOGENOM" id="CLU_045401_1_1_9"/>
<dbReference type="UniPathway" id="UPA00554">
    <property type="reaction ID" value="UER00611"/>
</dbReference>
<dbReference type="Proteomes" id="UP000006386">
    <property type="component" value="Chromosome"/>
</dbReference>
<dbReference type="GO" id="GO:0005737">
    <property type="term" value="C:cytoplasm"/>
    <property type="evidence" value="ECO:0007669"/>
    <property type="project" value="UniProtKB-SubCell"/>
</dbReference>
<dbReference type="GO" id="GO:0004459">
    <property type="term" value="F:L-lactate dehydrogenase activity"/>
    <property type="evidence" value="ECO:0007669"/>
    <property type="project" value="UniProtKB-UniRule"/>
</dbReference>
<dbReference type="GO" id="GO:0006096">
    <property type="term" value="P:glycolytic process"/>
    <property type="evidence" value="ECO:0007669"/>
    <property type="project" value="UniProtKB-UniRule"/>
</dbReference>
<dbReference type="GO" id="GO:0006089">
    <property type="term" value="P:lactate metabolic process"/>
    <property type="evidence" value="ECO:0007669"/>
    <property type="project" value="TreeGrafter"/>
</dbReference>
<dbReference type="CDD" id="cd05291">
    <property type="entry name" value="HicDH_like"/>
    <property type="match status" value="1"/>
</dbReference>
<dbReference type="FunFam" id="3.40.50.720:FF:000018">
    <property type="entry name" value="Malate dehydrogenase"/>
    <property type="match status" value="1"/>
</dbReference>
<dbReference type="Gene3D" id="3.90.110.10">
    <property type="entry name" value="Lactate dehydrogenase/glycoside hydrolase, family 4, C-terminal"/>
    <property type="match status" value="1"/>
</dbReference>
<dbReference type="Gene3D" id="3.40.50.720">
    <property type="entry name" value="NAD(P)-binding Rossmann-like Domain"/>
    <property type="match status" value="1"/>
</dbReference>
<dbReference type="HAMAP" id="MF_00488">
    <property type="entry name" value="Lactate_dehydrog"/>
    <property type="match status" value="1"/>
</dbReference>
<dbReference type="InterPro" id="IPR001557">
    <property type="entry name" value="L-lactate/malate_DH"/>
</dbReference>
<dbReference type="InterPro" id="IPR011304">
    <property type="entry name" value="L-lactate_DH"/>
</dbReference>
<dbReference type="InterPro" id="IPR018177">
    <property type="entry name" value="L-lactate_DH_AS"/>
</dbReference>
<dbReference type="InterPro" id="IPR022383">
    <property type="entry name" value="Lactate/malate_DH_C"/>
</dbReference>
<dbReference type="InterPro" id="IPR001236">
    <property type="entry name" value="Lactate/malate_DH_N"/>
</dbReference>
<dbReference type="InterPro" id="IPR015955">
    <property type="entry name" value="Lactate_DH/Glyco_Ohase_4_C"/>
</dbReference>
<dbReference type="InterPro" id="IPR036291">
    <property type="entry name" value="NAD(P)-bd_dom_sf"/>
</dbReference>
<dbReference type="NCBIfam" id="TIGR01771">
    <property type="entry name" value="L-LDH-NAD"/>
    <property type="match status" value="1"/>
</dbReference>
<dbReference type="NCBIfam" id="NF000824">
    <property type="entry name" value="PRK00066.1"/>
    <property type="match status" value="1"/>
</dbReference>
<dbReference type="PANTHER" id="PTHR43128">
    <property type="entry name" value="L-2-HYDROXYCARBOXYLATE DEHYDROGENASE (NAD(P)(+))"/>
    <property type="match status" value="1"/>
</dbReference>
<dbReference type="PANTHER" id="PTHR43128:SF16">
    <property type="entry name" value="L-LACTATE DEHYDROGENASE"/>
    <property type="match status" value="1"/>
</dbReference>
<dbReference type="Pfam" id="PF02866">
    <property type="entry name" value="Ldh_1_C"/>
    <property type="match status" value="1"/>
</dbReference>
<dbReference type="Pfam" id="PF00056">
    <property type="entry name" value="Ldh_1_N"/>
    <property type="match status" value="1"/>
</dbReference>
<dbReference type="PIRSF" id="PIRSF000102">
    <property type="entry name" value="Lac_mal_DH"/>
    <property type="match status" value="1"/>
</dbReference>
<dbReference type="PRINTS" id="PR00086">
    <property type="entry name" value="LLDHDRGNASE"/>
</dbReference>
<dbReference type="SUPFAM" id="SSF56327">
    <property type="entry name" value="LDH C-terminal domain-like"/>
    <property type="match status" value="1"/>
</dbReference>
<dbReference type="SUPFAM" id="SSF51735">
    <property type="entry name" value="NAD(P)-binding Rossmann-fold domains"/>
    <property type="match status" value="1"/>
</dbReference>
<dbReference type="PROSITE" id="PS00064">
    <property type="entry name" value="L_LDH"/>
    <property type="match status" value="1"/>
</dbReference>
<feature type="chain" id="PRO_0000343843" description="L-lactate dehydrogenase 2">
    <location>
        <begin position="1"/>
        <end position="319"/>
    </location>
</feature>
<feature type="active site" description="Proton acceptor" evidence="1">
    <location>
        <position position="178"/>
    </location>
</feature>
<feature type="binding site" evidence="1">
    <location>
        <position position="16"/>
    </location>
    <ligand>
        <name>NAD(+)</name>
        <dbReference type="ChEBI" id="CHEBI:57540"/>
    </ligand>
</feature>
<feature type="binding site" evidence="1">
    <location>
        <position position="37"/>
    </location>
    <ligand>
        <name>NAD(+)</name>
        <dbReference type="ChEBI" id="CHEBI:57540"/>
    </ligand>
</feature>
<feature type="binding site" evidence="1">
    <location>
        <position position="42"/>
    </location>
    <ligand>
        <name>NAD(+)</name>
        <dbReference type="ChEBI" id="CHEBI:57540"/>
    </ligand>
</feature>
<feature type="binding site" evidence="1">
    <location>
        <position position="68"/>
    </location>
    <ligand>
        <name>NAD(+)</name>
        <dbReference type="ChEBI" id="CHEBI:57540"/>
    </ligand>
</feature>
<feature type="binding site" evidence="1">
    <location>
        <begin position="82"/>
        <end position="83"/>
    </location>
    <ligand>
        <name>NAD(+)</name>
        <dbReference type="ChEBI" id="CHEBI:57540"/>
    </ligand>
</feature>
<feature type="binding site" evidence="1">
    <location>
        <position position="85"/>
    </location>
    <ligand>
        <name>substrate</name>
    </ligand>
</feature>
<feature type="binding site" evidence="1">
    <location>
        <position position="91"/>
    </location>
    <ligand>
        <name>substrate</name>
    </ligand>
</feature>
<feature type="binding site" evidence="1">
    <location>
        <position position="104"/>
    </location>
    <ligand>
        <name>NAD(+)</name>
        <dbReference type="ChEBI" id="CHEBI:57540"/>
    </ligand>
</feature>
<feature type="binding site" evidence="1">
    <location>
        <begin position="121"/>
        <end position="123"/>
    </location>
    <ligand>
        <name>NAD(+)</name>
        <dbReference type="ChEBI" id="CHEBI:57540"/>
    </ligand>
</feature>
<feature type="binding site" evidence="1">
    <location>
        <begin position="123"/>
        <end position="126"/>
    </location>
    <ligand>
        <name>substrate</name>
    </ligand>
</feature>
<feature type="binding site" evidence="1">
    <location>
        <position position="146"/>
    </location>
    <ligand>
        <name>NAD(+)</name>
        <dbReference type="ChEBI" id="CHEBI:57540"/>
    </ligand>
</feature>
<feature type="binding site" evidence="1">
    <location>
        <begin position="151"/>
        <end position="154"/>
    </location>
    <ligand>
        <name>substrate</name>
    </ligand>
</feature>
<feature type="binding site" evidence="1">
    <location>
        <position position="231"/>
    </location>
    <ligand>
        <name>substrate</name>
    </ligand>
</feature>
<feature type="modified residue" description="Phosphotyrosine" evidence="1">
    <location>
        <position position="222"/>
    </location>
</feature>
<evidence type="ECO:0000255" key="1">
    <source>
        <dbReference type="HAMAP-Rule" id="MF_00488"/>
    </source>
</evidence>
<evidence type="ECO:0000269" key="2">
    <source>
    </source>
</evidence>
<evidence type="ECO:0000305" key="3"/>
<gene>
    <name evidence="1" type="primary">ldh2</name>
    <name type="ordered locus">NWMN_2499</name>
</gene>
<sequence>MKTFGKKVVLIGDGSVGSSYAFAMVTQGVADEFVIIDIAKDKVKADVQDLNHGTVHSPSPVDVKAGEYEDCKDADLVVITAGAPQKPGETRLQLVEKNTKIMKSIVKSVMDSGFDGYFLIAANPVDILTRFVKEYTGLPAERVIGSGTVLDSARLQYLISQELGVAPSSVDASIIGEHGDTELAVWSQANVAGISVYDTLKEQTGSEAKAEEIYVNTRDAAYEIIQAKGSTYYGIALALMRISKAILNNENNVLNVSIQLDGQYGGHKGVYLGVPTLVNQHGAVKIYEMPLSAEEQALFDKSVKTLEDTFDSIKYLLED</sequence>
<organism>
    <name type="scientific">Staphylococcus aureus (strain Newman)</name>
    <dbReference type="NCBI Taxonomy" id="426430"/>
    <lineage>
        <taxon>Bacteria</taxon>
        <taxon>Bacillati</taxon>
        <taxon>Bacillota</taxon>
        <taxon>Bacilli</taxon>
        <taxon>Bacillales</taxon>
        <taxon>Staphylococcaceae</taxon>
        <taxon>Staphylococcus</taxon>
    </lineage>
</organism>
<comment type="function">
    <text evidence="1 2">Catalyzes the conversion of lactate to pyruvate (Potential). Contributes to S.aureus growth during nitrosative stress in both aerobically and anaerobically cultured cells, despite playing a secondary role in this resistance mechanism (PubMed:18356528).</text>
</comment>
<comment type="catalytic activity">
    <reaction evidence="1">
        <text>(S)-lactate + NAD(+) = pyruvate + NADH + H(+)</text>
        <dbReference type="Rhea" id="RHEA:23444"/>
        <dbReference type="ChEBI" id="CHEBI:15361"/>
        <dbReference type="ChEBI" id="CHEBI:15378"/>
        <dbReference type="ChEBI" id="CHEBI:16651"/>
        <dbReference type="ChEBI" id="CHEBI:57540"/>
        <dbReference type="ChEBI" id="CHEBI:57945"/>
        <dbReference type="EC" id="1.1.1.27"/>
    </reaction>
</comment>
<comment type="pathway">
    <text evidence="1">Fermentation; pyruvate fermentation to lactate; (S)-lactate from pyruvate: step 1/1.</text>
</comment>
<comment type="subunit">
    <text evidence="1">Homotetramer.</text>
</comment>
<comment type="subcellular location">
    <subcellularLocation>
        <location evidence="1">Cytoplasm</location>
    </subcellularLocation>
</comment>
<comment type="similarity">
    <text evidence="1 3">Belongs to the LDH/MDH superfamily. LDH family.</text>
</comment>
<name>LDH2_STAAE</name>